<sequence length="120" mass="14193">MRYYEIVLIIHPDSDNQIDNLVNYYSEIIINSTGKIHRLENWGRRQLAYAIKNLNKAYYLLLNIEISKNILDILDNDFRFNEIILRYLIMRTKNIIVDPSAMVKKKDDNNQEGNNSTVCI</sequence>
<keyword id="KW-1185">Reference proteome</keyword>
<keyword id="KW-0687">Ribonucleoprotein</keyword>
<keyword id="KW-0689">Ribosomal protein</keyword>
<keyword id="KW-0694">RNA-binding</keyword>
<keyword id="KW-0699">rRNA-binding</keyword>
<reference key="1">
    <citation type="journal article" date="2003" name="Proc. Natl. Acad. Sci. U.S.A.">
        <title>The genome sequence of Blochmannia floridanus: comparative analysis of reduced genomes.</title>
        <authorList>
            <person name="Gil R."/>
            <person name="Silva F.J."/>
            <person name="Zientz E."/>
            <person name="Delmotte F."/>
            <person name="Gonzalez-Candelas F."/>
            <person name="Latorre A."/>
            <person name="Rausell C."/>
            <person name="Kamerbeek J."/>
            <person name="Gadau J."/>
            <person name="Hoelldobler B."/>
            <person name="van Ham R.C.H.J."/>
            <person name="Gross R."/>
            <person name="Moya A."/>
        </authorList>
    </citation>
    <scope>NUCLEOTIDE SEQUENCE [LARGE SCALE GENOMIC DNA]</scope>
</reference>
<feature type="chain" id="PRO_0000176747" description="Small ribosomal subunit protein bS6">
    <location>
        <begin position="1"/>
        <end position="120"/>
    </location>
</feature>
<proteinExistence type="inferred from homology"/>
<protein>
    <recommendedName>
        <fullName evidence="1">Small ribosomal subunit protein bS6</fullName>
    </recommendedName>
    <alternativeName>
        <fullName evidence="2">30S ribosomal protein S6</fullName>
    </alternativeName>
</protein>
<dbReference type="EMBL" id="BX248583">
    <property type="protein sequence ID" value="CAD83608.1"/>
    <property type="molecule type" value="Genomic_DNA"/>
</dbReference>
<dbReference type="SMR" id="Q7VQN9"/>
<dbReference type="STRING" id="203907.Bfl085"/>
<dbReference type="KEGG" id="bfl:Bfl085"/>
<dbReference type="eggNOG" id="COG0360">
    <property type="taxonomic scope" value="Bacteria"/>
</dbReference>
<dbReference type="HOGENOM" id="CLU_113441_6_1_6"/>
<dbReference type="OrthoDB" id="9812702at2"/>
<dbReference type="Proteomes" id="UP000002192">
    <property type="component" value="Chromosome"/>
</dbReference>
<dbReference type="GO" id="GO:0022627">
    <property type="term" value="C:cytosolic small ribosomal subunit"/>
    <property type="evidence" value="ECO:0007669"/>
    <property type="project" value="TreeGrafter"/>
</dbReference>
<dbReference type="GO" id="GO:0070181">
    <property type="term" value="F:small ribosomal subunit rRNA binding"/>
    <property type="evidence" value="ECO:0007669"/>
    <property type="project" value="TreeGrafter"/>
</dbReference>
<dbReference type="GO" id="GO:0003735">
    <property type="term" value="F:structural constituent of ribosome"/>
    <property type="evidence" value="ECO:0007669"/>
    <property type="project" value="InterPro"/>
</dbReference>
<dbReference type="GO" id="GO:0006412">
    <property type="term" value="P:translation"/>
    <property type="evidence" value="ECO:0007669"/>
    <property type="project" value="UniProtKB-UniRule"/>
</dbReference>
<dbReference type="CDD" id="cd00473">
    <property type="entry name" value="bS6"/>
    <property type="match status" value="1"/>
</dbReference>
<dbReference type="Gene3D" id="3.30.70.60">
    <property type="match status" value="1"/>
</dbReference>
<dbReference type="HAMAP" id="MF_00360">
    <property type="entry name" value="Ribosomal_bS6"/>
    <property type="match status" value="1"/>
</dbReference>
<dbReference type="InterPro" id="IPR000529">
    <property type="entry name" value="Ribosomal_bS6"/>
</dbReference>
<dbReference type="InterPro" id="IPR020815">
    <property type="entry name" value="Ribosomal_bS6_CS"/>
</dbReference>
<dbReference type="InterPro" id="IPR035980">
    <property type="entry name" value="Ribosomal_bS6_sf"/>
</dbReference>
<dbReference type="InterPro" id="IPR020814">
    <property type="entry name" value="Ribosomal_S6_plastid/chlpt"/>
</dbReference>
<dbReference type="InterPro" id="IPR014717">
    <property type="entry name" value="Transl_elong_EF1B/ribsomal_bS6"/>
</dbReference>
<dbReference type="NCBIfam" id="TIGR00166">
    <property type="entry name" value="S6"/>
    <property type="match status" value="1"/>
</dbReference>
<dbReference type="PANTHER" id="PTHR21011">
    <property type="entry name" value="MITOCHONDRIAL 28S RIBOSOMAL PROTEIN S6"/>
    <property type="match status" value="1"/>
</dbReference>
<dbReference type="PANTHER" id="PTHR21011:SF1">
    <property type="entry name" value="SMALL RIBOSOMAL SUBUNIT PROTEIN BS6M"/>
    <property type="match status" value="1"/>
</dbReference>
<dbReference type="Pfam" id="PF01250">
    <property type="entry name" value="Ribosomal_S6"/>
    <property type="match status" value="1"/>
</dbReference>
<dbReference type="SUPFAM" id="SSF54995">
    <property type="entry name" value="Ribosomal protein S6"/>
    <property type="match status" value="1"/>
</dbReference>
<dbReference type="PROSITE" id="PS01048">
    <property type="entry name" value="RIBOSOMAL_S6"/>
    <property type="match status" value="1"/>
</dbReference>
<accession>Q7VQN9</accession>
<organism>
    <name type="scientific">Blochmanniella floridana</name>
    <dbReference type="NCBI Taxonomy" id="203907"/>
    <lineage>
        <taxon>Bacteria</taxon>
        <taxon>Pseudomonadati</taxon>
        <taxon>Pseudomonadota</taxon>
        <taxon>Gammaproteobacteria</taxon>
        <taxon>Enterobacterales</taxon>
        <taxon>Enterobacteriaceae</taxon>
        <taxon>ant endosymbionts</taxon>
        <taxon>Candidatus Blochmanniella</taxon>
    </lineage>
</organism>
<name>RS6_BLOFL</name>
<gene>
    <name evidence="1" type="primary">rpsF</name>
    <name type="ordered locus">Bfl085</name>
</gene>
<comment type="function">
    <text evidence="1">Binds together with bS18 to 16S ribosomal RNA.</text>
</comment>
<comment type="similarity">
    <text evidence="1">Belongs to the bacterial ribosomal protein bS6 family.</text>
</comment>
<evidence type="ECO:0000255" key="1">
    <source>
        <dbReference type="HAMAP-Rule" id="MF_00360"/>
    </source>
</evidence>
<evidence type="ECO:0000305" key="2"/>